<sequence length="346" mass="38119">MSDADRLITPEKRGEDIDTTLRPQSLDDFTGQAEARANLKVFIEAAKNRGEALDHVLFVGPPGLGKTTLAQIMAKELGVNFKSTSGPVIAKAGDLAALLTNLEERDVLFIDEIHRLNPAVEEILYPAMEDFQLDLIIGEGPAARSVKIDLSKFTLVAATTRLGLLTTPLRDRFGIPVRLAFYTVDELELIVRRGARLMGLNMTDGGAREIARRARGTPRIAGRLLRRVRDFAEVARAEAVTREIADEALTRLLVDNMGLDQLDMRYLTMIAVNFGGGPVGIETIAAGLSEPRDAIEDIIEPYMIQQGFIQRTPRGRILTATAWKHLGLQPPKDLEAAQFRLTLEDD</sequence>
<keyword id="KW-0067">ATP-binding</keyword>
<keyword id="KW-0963">Cytoplasm</keyword>
<keyword id="KW-0227">DNA damage</keyword>
<keyword id="KW-0233">DNA recombination</keyword>
<keyword id="KW-0234">DNA repair</keyword>
<keyword id="KW-0238">DNA-binding</keyword>
<keyword id="KW-0378">Hydrolase</keyword>
<keyword id="KW-0547">Nucleotide-binding</keyword>
<keyword id="KW-1185">Reference proteome</keyword>
<reference key="1">
    <citation type="journal article" date="2001" name="Science">
        <title>The genome of the natural genetic engineer Agrobacterium tumefaciens C58.</title>
        <authorList>
            <person name="Wood D.W."/>
            <person name="Setubal J.C."/>
            <person name="Kaul R."/>
            <person name="Monks D.E."/>
            <person name="Kitajima J.P."/>
            <person name="Okura V.K."/>
            <person name="Zhou Y."/>
            <person name="Chen L."/>
            <person name="Wood G.E."/>
            <person name="Almeida N.F. Jr."/>
            <person name="Woo L."/>
            <person name="Chen Y."/>
            <person name="Paulsen I.T."/>
            <person name="Eisen J.A."/>
            <person name="Karp P.D."/>
            <person name="Bovee D. Sr."/>
            <person name="Chapman P."/>
            <person name="Clendenning J."/>
            <person name="Deatherage G."/>
            <person name="Gillet W."/>
            <person name="Grant C."/>
            <person name="Kutyavin T."/>
            <person name="Levy R."/>
            <person name="Li M.-J."/>
            <person name="McClelland E."/>
            <person name="Palmieri A."/>
            <person name="Raymond C."/>
            <person name="Rouse G."/>
            <person name="Saenphimmachak C."/>
            <person name="Wu Z."/>
            <person name="Romero P."/>
            <person name="Gordon D."/>
            <person name="Zhang S."/>
            <person name="Yoo H."/>
            <person name="Tao Y."/>
            <person name="Biddle P."/>
            <person name="Jung M."/>
            <person name="Krespan W."/>
            <person name="Perry M."/>
            <person name="Gordon-Kamm B."/>
            <person name="Liao L."/>
            <person name="Kim S."/>
            <person name="Hendrick C."/>
            <person name="Zhao Z.-Y."/>
            <person name="Dolan M."/>
            <person name="Chumley F."/>
            <person name="Tingey S.V."/>
            <person name="Tomb J.-F."/>
            <person name="Gordon M.P."/>
            <person name="Olson M.V."/>
            <person name="Nester E.W."/>
        </authorList>
    </citation>
    <scope>NUCLEOTIDE SEQUENCE [LARGE SCALE GENOMIC DNA]</scope>
    <source>
        <strain>C58 / ATCC 33970</strain>
    </source>
</reference>
<reference key="2">
    <citation type="journal article" date="2001" name="Science">
        <title>Genome sequence of the plant pathogen and biotechnology agent Agrobacterium tumefaciens C58.</title>
        <authorList>
            <person name="Goodner B."/>
            <person name="Hinkle G."/>
            <person name="Gattung S."/>
            <person name="Miller N."/>
            <person name="Blanchard M."/>
            <person name="Qurollo B."/>
            <person name="Goldman B.S."/>
            <person name="Cao Y."/>
            <person name="Askenazi M."/>
            <person name="Halling C."/>
            <person name="Mullin L."/>
            <person name="Houmiel K."/>
            <person name="Gordon J."/>
            <person name="Vaudin M."/>
            <person name="Iartchouk O."/>
            <person name="Epp A."/>
            <person name="Liu F."/>
            <person name="Wollam C."/>
            <person name="Allinger M."/>
            <person name="Doughty D."/>
            <person name="Scott C."/>
            <person name="Lappas C."/>
            <person name="Markelz B."/>
            <person name="Flanagan C."/>
            <person name="Crowell C."/>
            <person name="Gurson J."/>
            <person name="Lomo C."/>
            <person name="Sear C."/>
            <person name="Strub G."/>
            <person name="Cielo C."/>
            <person name="Slater S."/>
        </authorList>
    </citation>
    <scope>NUCLEOTIDE SEQUENCE [LARGE SCALE GENOMIC DNA]</scope>
    <source>
        <strain>C58 / ATCC 33970</strain>
    </source>
</reference>
<organism>
    <name type="scientific">Agrobacterium fabrum (strain C58 / ATCC 33970)</name>
    <name type="common">Agrobacterium tumefaciens (strain C58)</name>
    <dbReference type="NCBI Taxonomy" id="176299"/>
    <lineage>
        <taxon>Bacteria</taxon>
        <taxon>Pseudomonadati</taxon>
        <taxon>Pseudomonadota</taxon>
        <taxon>Alphaproteobacteria</taxon>
        <taxon>Hyphomicrobiales</taxon>
        <taxon>Rhizobiaceae</taxon>
        <taxon>Rhizobium/Agrobacterium group</taxon>
        <taxon>Agrobacterium</taxon>
        <taxon>Agrobacterium tumefaciens complex</taxon>
    </lineage>
</organism>
<protein>
    <recommendedName>
        <fullName evidence="1">Holliday junction branch migration complex subunit RuvB</fullName>
        <ecNumber evidence="1">3.6.4.-</ecNumber>
    </recommendedName>
</protein>
<proteinExistence type="inferred from homology"/>
<feature type="chain" id="PRO_0000165482" description="Holliday junction branch migration complex subunit RuvB">
    <location>
        <begin position="1"/>
        <end position="346"/>
    </location>
</feature>
<feature type="region of interest" description="Large ATPase domain (RuvB-L)" evidence="1">
    <location>
        <begin position="1"/>
        <end position="182"/>
    </location>
</feature>
<feature type="region of interest" description="Disordered" evidence="2">
    <location>
        <begin position="1"/>
        <end position="23"/>
    </location>
</feature>
<feature type="region of interest" description="Small ATPAse domain (RuvB-S)" evidence="1">
    <location>
        <begin position="183"/>
        <end position="253"/>
    </location>
</feature>
<feature type="region of interest" description="Head domain (RuvB-H)" evidence="1">
    <location>
        <begin position="256"/>
        <end position="346"/>
    </location>
</feature>
<feature type="compositionally biased region" description="Basic and acidic residues" evidence="2">
    <location>
        <begin position="1"/>
        <end position="16"/>
    </location>
</feature>
<feature type="binding site" evidence="1">
    <location>
        <position position="21"/>
    </location>
    <ligand>
        <name>ATP</name>
        <dbReference type="ChEBI" id="CHEBI:30616"/>
    </ligand>
</feature>
<feature type="binding site" evidence="1">
    <location>
        <position position="22"/>
    </location>
    <ligand>
        <name>ATP</name>
        <dbReference type="ChEBI" id="CHEBI:30616"/>
    </ligand>
</feature>
<feature type="binding site" evidence="1">
    <location>
        <position position="63"/>
    </location>
    <ligand>
        <name>ATP</name>
        <dbReference type="ChEBI" id="CHEBI:30616"/>
    </ligand>
</feature>
<feature type="binding site" evidence="1">
    <location>
        <position position="66"/>
    </location>
    <ligand>
        <name>ATP</name>
        <dbReference type="ChEBI" id="CHEBI:30616"/>
    </ligand>
</feature>
<feature type="binding site" evidence="1">
    <location>
        <position position="67"/>
    </location>
    <ligand>
        <name>ATP</name>
        <dbReference type="ChEBI" id="CHEBI:30616"/>
    </ligand>
</feature>
<feature type="binding site" evidence="1">
    <location>
        <position position="67"/>
    </location>
    <ligand>
        <name>Mg(2+)</name>
        <dbReference type="ChEBI" id="CHEBI:18420"/>
    </ligand>
</feature>
<feature type="binding site" evidence="1">
    <location>
        <position position="68"/>
    </location>
    <ligand>
        <name>ATP</name>
        <dbReference type="ChEBI" id="CHEBI:30616"/>
    </ligand>
</feature>
<feature type="binding site" evidence="1">
    <location>
        <begin position="129"/>
        <end position="131"/>
    </location>
    <ligand>
        <name>ATP</name>
        <dbReference type="ChEBI" id="CHEBI:30616"/>
    </ligand>
</feature>
<feature type="binding site" evidence="1">
    <location>
        <position position="172"/>
    </location>
    <ligand>
        <name>ATP</name>
        <dbReference type="ChEBI" id="CHEBI:30616"/>
    </ligand>
</feature>
<feature type="binding site" evidence="1">
    <location>
        <position position="182"/>
    </location>
    <ligand>
        <name>ATP</name>
        <dbReference type="ChEBI" id="CHEBI:30616"/>
    </ligand>
</feature>
<feature type="binding site" evidence="1">
    <location>
        <position position="219"/>
    </location>
    <ligand>
        <name>ATP</name>
        <dbReference type="ChEBI" id="CHEBI:30616"/>
    </ligand>
</feature>
<feature type="binding site" evidence="1">
    <location>
        <position position="292"/>
    </location>
    <ligand>
        <name>DNA</name>
        <dbReference type="ChEBI" id="CHEBI:16991"/>
    </ligand>
</feature>
<feature type="binding site" evidence="1">
    <location>
        <position position="311"/>
    </location>
    <ligand>
        <name>DNA</name>
        <dbReference type="ChEBI" id="CHEBI:16991"/>
    </ligand>
</feature>
<feature type="binding site" evidence="1">
    <location>
        <position position="316"/>
    </location>
    <ligand>
        <name>DNA</name>
        <dbReference type="ChEBI" id="CHEBI:16991"/>
    </ligand>
</feature>
<comment type="function">
    <text evidence="1">The RuvA-RuvB-RuvC complex processes Holliday junction (HJ) DNA during genetic recombination and DNA repair, while the RuvA-RuvB complex plays an important role in the rescue of blocked DNA replication forks via replication fork reversal (RFR). RuvA specifically binds to HJ cruciform DNA, conferring on it an open structure. The RuvB hexamer acts as an ATP-dependent pump, pulling dsDNA into and through the RuvAB complex. RuvB forms 2 homohexamers on either side of HJ DNA bound by 1 or 2 RuvA tetramers; 4 subunits per hexamer contact DNA at a time. Coordinated motions by a converter formed by DNA-disengaged RuvB subunits stimulates ATP hydrolysis and nucleotide exchange. Immobilization of the converter enables RuvB to convert the ATP-contained energy into a lever motion, pulling 2 nucleotides of DNA out of the RuvA tetramer per ATP hydrolyzed, thus driving DNA branch migration. The RuvB motors rotate together with the DNA substrate, which together with the progressing nucleotide cycle form the mechanistic basis for DNA recombination by continuous HJ branch migration. Branch migration allows RuvC to scan DNA until it finds its consensus sequence, where it cleaves and resolves cruciform DNA.</text>
</comment>
<comment type="catalytic activity">
    <reaction evidence="1">
        <text>ATP + H2O = ADP + phosphate + H(+)</text>
        <dbReference type="Rhea" id="RHEA:13065"/>
        <dbReference type="ChEBI" id="CHEBI:15377"/>
        <dbReference type="ChEBI" id="CHEBI:15378"/>
        <dbReference type="ChEBI" id="CHEBI:30616"/>
        <dbReference type="ChEBI" id="CHEBI:43474"/>
        <dbReference type="ChEBI" id="CHEBI:456216"/>
    </reaction>
</comment>
<comment type="subunit">
    <text evidence="1">Homohexamer. Forms an RuvA(8)-RuvB(12)-Holliday junction (HJ) complex. HJ DNA is sandwiched between 2 RuvA tetramers; dsDNA enters through RuvA and exits via RuvB. An RuvB hexamer assembles on each DNA strand where it exits the tetramer. Each RuvB hexamer is contacted by two RuvA subunits (via domain III) on 2 adjacent RuvB subunits; this complex drives branch migration. In the full resolvosome a probable DNA-RuvA(4)-RuvB(12)-RuvC(2) complex forms which resolves the HJ.</text>
</comment>
<comment type="subcellular location">
    <subcellularLocation>
        <location evidence="1">Cytoplasm</location>
    </subcellularLocation>
</comment>
<comment type="domain">
    <text evidence="1">Has 3 domains, the large (RuvB-L) and small ATPase (RuvB-S) domains and the C-terminal head (RuvB-H) domain. The head domain binds DNA, while the ATPase domains jointly bind ATP, ADP or are empty depending on the state of the subunit in the translocation cycle. During a single DNA translocation step the structure of each domain remains the same, but their relative positions change.</text>
</comment>
<comment type="similarity">
    <text evidence="1">Belongs to the RuvB family.</text>
</comment>
<name>RUVB_AGRFC</name>
<evidence type="ECO:0000255" key="1">
    <source>
        <dbReference type="HAMAP-Rule" id="MF_00016"/>
    </source>
</evidence>
<evidence type="ECO:0000256" key="2">
    <source>
        <dbReference type="SAM" id="MobiDB-lite"/>
    </source>
</evidence>
<dbReference type="EC" id="3.6.4.-" evidence="1"/>
<dbReference type="EMBL" id="AE007870">
    <property type="protein sequence ID" value="AAK89683.1"/>
    <property type="molecule type" value="Genomic_DNA"/>
</dbReference>
<dbReference type="PIR" id="A96270">
    <property type="entry name" value="A96270"/>
</dbReference>
<dbReference type="PIR" id="AF3014">
    <property type="entry name" value="AF3014"/>
</dbReference>
<dbReference type="RefSeq" id="NP_356898.1">
    <property type="nucleotide sequence ID" value="NC_003063.2"/>
</dbReference>
<dbReference type="RefSeq" id="WP_006314740.1">
    <property type="nucleotide sequence ID" value="NC_003063.2"/>
</dbReference>
<dbReference type="SMR" id="Q8U9K6"/>
<dbReference type="STRING" id="176299.Atu3722"/>
<dbReference type="EnsemblBacteria" id="AAK89683">
    <property type="protein sequence ID" value="AAK89683"/>
    <property type="gene ID" value="Atu3722"/>
</dbReference>
<dbReference type="GeneID" id="1135596"/>
<dbReference type="KEGG" id="atu:Atu3722"/>
<dbReference type="PATRIC" id="fig|176299.10.peg.3555"/>
<dbReference type="eggNOG" id="COG2255">
    <property type="taxonomic scope" value="Bacteria"/>
</dbReference>
<dbReference type="HOGENOM" id="CLU_055599_1_0_5"/>
<dbReference type="OrthoDB" id="9804478at2"/>
<dbReference type="PhylomeDB" id="Q8U9K6"/>
<dbReference type="BioCyc" id="AGRO:ATU3722-MONOMER"/>
<dbReference type="Proteomes" id="UP000000813">
    <property type="component" value="Chromosome linear"/>
</dbReference>
<dbReference type="GO" id="GO:0005737">
    <property type="term" value="C:cytoplasm"/>
    <property type="evidence" value="ECO:0007669"/>
    <property type="project" value="UniProtKB-SubCell"/>
</dbReference>
<dbReference type="GO" id="GO:0048476">
    <property type="term" value="C:Holliday junction resolvase complex"/>
    <property type="evidence" value="ECO:0007669"/>
    <property type="project" value="UniProtKB-UniRule"/>
</dbReference>
<dbReference type="GO" id="GO:0005524">
    <property type="term" value="F:ATP binding"/>
    <property type="evidence" value="ECO:0007669"/>
    <property type="project" value="UniProtKB-UniRule"/>
</dbReference>
<dbReference type="GO" id="GO:0016887">
    <property type="term" value="F:ATP hydrolysis activity"/>
    <property type="evidence" value="ECO:0007669"/>
    <property type="project" value="InterPro"/>
</dbReference>
<dbReference type="GO" id="GO:0000400">
    <property type="term" value="F:four-way junction DNA binding"/>
    <property type="evidence" value="ECO:0007669"/>
    <property type="project" value="UniProtKB-UniRule"/>
</dbReference>
<dbReference type="GO" id="GO:0009378">
    <property type="term" value="F:four-way junction helicase activity"/>
    <property type="evidence" value="ECO:0007669"/>
    <property type="project" value="InterPro"/>
</dbReference>
<dbReference type="GO" id="GO:0006310">
    <property type="term" value="P:DNA recombination"/>
    <property type="evidence" value="ECO:0007669"/>
    <property type="project" value="UniProtKB-UniRule"/>
</dbReference>
<dbReference type="GO" id="GO:0006281">
    <property type="term" value="P:DNA repair"/>
    <property type="evidence" value="ECO:0007669"/>
    <property type="project" value="UniProtKB-UniRule"/>
</dbReference>
<dbReference type="CDD" id="cd00009">
    <property type="entry name" value="AAA"/>
    <property type="match status" value="1"/>
</dbReference>
<dbReference type="Gene3D" id="1.10.8.60">
    <property type="match status" value="1"/>
</dbReference>
<dbReference type="Gene3D" id="3.40.50.300">
    <property type="entry name" value="P-loop containing nucleotide triphosphate hydrolases"/>
    <property type="match status" value="1"/>
</dbReference>
<dbReference type="Gene3D" id="1.10.10.10">
    <property type="entry name" value="Winged helix-like DNA-binding domain superfamily/Winged helix DNA-binding domain"/>
    <property type="match status" value="1"/>
</dbReference>
<dbReference type="HAMAP" id="MF_00016">
    <property type="entry name" value="DNA_HJ_migration_RuvB"/>
    <property type="match status" value="1"/>
</dbReference>
<dbReference type="InterPro" id="IPR003593">
    <property type="entry name" value="AAA+_ATPase"/>
</dbReference>
<dbReference type="InterPro" id="IPR041445">
    <property type="entry name" value="AAA_lid_4"/>
</dbReference>
<dbReference type="InterPro" id="IPR000641">
    <property type="entry name" value="CbxX/CfxQ"/>
</dbReference>
<dbReference type="InterPro" id="IPR004605">
    <property type="entry name" value="DNA_helicase_Holl-junc_RuvB"/>
</dbReference>
<dbReference type="InterPro" id="IPR027417">
    <property type="entry name" value="P-loop_NTPase"/>
</dbReference>
<dbReference type="InterPro" id="IPR008824">
    <property type="entry name" value="RuvB-like_N"/>
</dbReference>
<dbReference type="InterPro" id="IPR008823">
    <property type="entry name" value="RuvB_C"/>
</dbReference>
<dbReference type="InterPro" id="IPR036388">
    <property type="entry name" value="WH-like_DNA-bd_sf"/>
</dbReference>
<dbReference type="InterPro" id="IPR036390">
    <property type="entry name" value="WH_DNA-bd_sf"/>
</dbReference>
<dbReference type="NCBIfam" id="NF000868">
    <property type="entry name" value="PRK00080.1"/>
    <property type="match status" value="1"/>
</dbReference>
<dbReference type="NCBIfam" id="TIGR00635">
    <property type="entry name" value="ruvB"/>
    <property type="match status" value="1"/>
</dbReference>
<dbReference type="PANTHER" id="PTHR42848">
    <property type="match status" value="1"/>
</dbReference>
<dbReference type="PANTHER" id="PTHR42848:SF1">
    <property type="entry name" value="HOLLIDAY JUNCTION BRANCH MIGRATION COMPLEX SUBUNIT RUVB"/>
    <property type="match status" value="1"/>
</dbReference>
<dbReference type="Pfam" id="PF17864">
    <property type="entry name" value="AAA_lid_4"/>
    <property type="match status" value="1"/>
</dbReference>
<dbReference type="Pfam" id="PF05491">
    <property type="entry name" value="RuvB_C"/>
    <property type="match status" value="1"/>
</dbReference>
<dbReference type="Pfam" id="PF05496">
    <property type="entry name" value="RuvB_N"/>
    <property type="match status" value="1"/>
</dbReference>
<dbReference type="PRINTS" id="PR00819">
    <property type="entry name" value="CBXCFQXSUPER"/>
</dbReference>
<dbReference type="SMART" id="SM00382">
    <property type="entry name" value="AAA"/>
    <property type="match status" value="1"/>
</dbReference>
<dbReference type="SUPFAM" id="SSF52540">
    <property type="entry name" value="P-loop containing nucleoside triphosphate hydrolases"/>
    <property type="match status" value="1"/>
</dbReference>
<dbReference type="SUPFAM" id="SSF46785">
    <property type="entry name" value="Winged helix' DNA-binding domain"/>
    <property type="match status" value="1"/>
</dbReference>
<accession>Q8U9K6</accession>
<gene>
    <name evidence="1" type="primary">ruvB</name>
    <name type="ordered locus">Atu3722</name>
    <name type="ORF">AGR_L_2225</name>
</gene>